<evidence type="ECO:0000250" key="1">
    <source>
        <dbReference type="UniProtKB" id="P08151"/>
    </source>
</evidence>
<evidence type="ECO:0000255" key="2">
    <source>
        <dbReference type="PROSITE-ProRule" id="PRU00042"/>
    </source>
</evidence>
<evidence type="ECO:0000256" key="3">
    <source>
        <dbReference type="SAM" id="MobiDB-lite"/>
    </source>
</evidence>
<evidence type="ECO:0000305" key="4"/>
<evidence type="ECO:0000305" key="5">
    <source>
    </source>
</evidence>
<dbReference type="EMBL" id="U57454">
    <property type="protein sequence ID" value="AAC24946.1"/>
    <property type="molecule type" value="mRNA"/>
</dbReference>
<dbReference type="PIR" id="T12064">
    <property type="entry name" value="T12064"/>
</dbReference>
<dbReference type="SMR" id="Q91690"/>
<dbReference type="AGR" id="Xenbase:XB-GENE-864895"/>
<dbReference type="Xenbase" id="XB-GENE-864895">
    <property type="gene designation" value="gli1.S"/>
</dbReference>
<dbReference type="Proteomes" id="UP000186698">
    <property type="component" value="Unplaced"/>
</dbReference>
<dbReference type="GO" id="GO:0005737">
    <property type="term" value="C:cytoplasm"/>
    <property type="evidence" value="ECO:0000250"/>
    <property type="project" value="UniProtKB"/>
</dbReference>
<dbReference type="GO" id="GO:0005634">
    <property type="term" value="C:nucleus"/>
    <property type="evidence" value="ECO:0000250"/>
    <property type="project" value="UniProtKB"/>
</dbReference>
<dbReference type="GO" id="GO:0003682">
    <property type="term" value="F:chromatin binding"/>
    <property type="evidence" value="ECO:0000250"/>
    <property type="project" value="UniProtKB"/>
</dbReference>
<dbReference type="GO" id="GO:0000981">
    <property type="term" value="F:DNA-binding transcription factor activity, RNA polymerase II-specific"/>
    <property type="evidence" value="ECO:0000318"/>
    <property type="project" value="GO_Central"/>
</dbReference>
<dbReference type="GO" id="GO:0000978">
    <property type="term" value="F:RNA polymerase II cis-regulatory region sequence-specific DNA binding"/>
    <property type="evidence" value="ECO:0000318"/>
    <property type="project" value="GO_Central"/>
</dbReference>
<dbReference type="GO" id="GO:0043565">
    <property type="term" value="F:sequence-specific DNA binding"/>
    <property type="evidence" value="ECO:0000250"/>
    <property type="project" value="UniProtKB"/>
</dbReference>
<dbReference type="GO" id="GO:0008270">
    <property type="term" value="F:zinc ion binding"/>
    <property type="evidence" value="ECO:0007669"/>
    <property type="project" value="UniProtKB-KW"/>
</dbReference>
<dbReference type="GO" id="GO:0030154">
    <property type="term" value="P:cell differentiation"/>
    <property type="evidence" value="ECO:0007669"/>
    <property type="project" value="UniProtKB-KW"/>
</dbReference>
<dbReference type="GO" id="GO:0045893">
    <property type="term" value="P:positive regulation of DNA-templated transcription"/>
    <property type="evidence" value="ECO:0000250"/>
    <property type="project" value="UniProtKB"/>
</dbReference>
<dbReference type="GO" id="GO:0045944">
    <property type="term" value="P:positive regulation of transcription by RNA polymerase II"/>
    <property type="evidence" value="ECO:0000250"/>
    <property type="project" value="UniProtKB"/>
</dbReference>
<dbReference type="GO" id="GO:0006357">
    <property type="term" value="P:regulation of transcription by RNA polymerase II"/>
    <property type="evidence" value="ECO:0000318"/>
    <property type="project" value="GO_Central"/>
</dbReference>
<dbReference type="GO" id="GO:0007224">
    <property type="term" value="P:smoothened signaling pathway"/>
    <property type="evidence" value="ECO:0000318"/>
    <property type="project" value="GO_Central"/>
</dbReference>
<dbReference type="FunFam" id="3.30.160.60:FF:000019">
    <property type="entry name" value="GLI family zinc finger 3"/>
    <property type="match status" value="1"/>
</dbReference>
<dbReference type="FunFam" id="3.30.160.60:FF:000031">
    <property type="entry name" value="GLI family zinc finger 3"/>
    <property type="match status" value="1"/>
</dbReference>
<dbReference type="FunFam" id="3.30.160.60:FF:000036">
    <property type="entry name" value="GLI family zinc finger 3"/>
    <property type="match status" value="1"/>
</dbReference>
<dbReference type="FunFam" id="3.30.160.60:FF:000048">
    <property type="entry name" value="GLI family zinc finger 3"/>
    <property type="match status" value="1"/>
</dbReference>
<dbReference type="FunFam" id="3.30.160.60:FF:000068">
    <property type="entry name" value="GLI family zinc finger 3"/>
    <property type="match status" value="1"/>
</dbReference>
<dbReference type="Gene3D" id="3.30.160.60">
    <property type="entry name" value="Classic Zinc Finger"/>
    <property type="match status" value="5"/>
</dbReference>
<dbReference type="InterPro" id="IPR043359">
    <property type="entry name" value="GLI-like"/>
</dbReference>
<dbReference type="InterPro" id="IPR056436">
    <property type="entry name" value="Znf-C2H2_ZIC1-5/GLI1-3-like"/>
</dbReference>
<dbReference type="InterPro" id="IPR036236">
    <property type="entry name" value="Znf_C2H2_sf"/>
</dbReference>
<dbReference type="InterPro" id="IPR013087">
    <property type="entry name" value="Znf_C2H2_type"/>
</dbReference>
<dbReference type="PANTHER" id="PTHR45718">
    <property type="entry name" value="TRANSCRIPTIONAL ACTIVATOR CUBITUS INTERRUPTUS"/>
    <property type="match status" value="1"/>
</dbReference>
<dbReference type="PANTHER" id="PTHR45718:SF2">
    <property type="entry name" value="ZINC FINGER PROTEIN GLI1"/>
    <property type="match status" value="1"/>
</dbReference>
<dbReference type="Pfam" id="PF00096">
    <property type="entry name" value="zf-C2H2"/>
    <property type="match status" value="2"/>
</dbReference>
<dbReference type="Pfam" id="PF23561">
    <property type="entry name" value="zf-C2H2_15"/>
    <property type="match status" value="1"/>
</dbReference>
<dbReference type="SMART" id="SM00355">
    <property type="entry name" value="ZnF_C2H2"/>
    <property type="match status" value="5"/>
</dbReference>
<dbReference type="SUPFAM" id="SSF57667">
    <property type="entry name" value="beta-beta-alpha zinc fingers"/>
    <property type="match status" value="3"/>
</dbReference>
<dbReference type="PROSITE" id="PS00028">
    <property type="entry name" value="ZINC_FINGER_C2H2_1"/>
    <property type="match status" value="4"/>
</dbReference>
<dbReference type="PROSITE" id="PS50157">
    <property type="entry name" value="ZINC_FINGER_C2H2_2"/>
    <property type="match status" value="5"/>
</dbReference>
<proteinExistence type="evidence at transcript level"/>
<comment type="function">
    <text evidence="1 5">Acts as a transcriptional activator. Binds to the DNA consensus sequence 5'-GACCACCCA-3' (By similarity). May regulate the transcription of specific genes during normal development (PubMed:9216996). Mediates SHH signaling (PubMed:9216996). Plays a role in cell proliferation and differentiation via its role in SHH signaling (By similarity).</text>
</comment>
<comment type="subcellular location">
    <subcellularLocation>
        <location evidence="1">Cytoplasm</location>
    </subcellularLocation>
    <subcellularLocation>
        <location evidence="1">Nucleus</location>
    </subcellularLocation>
</comment>
<comment type="similarity">
    <text evidence="4">Belongs to the GLI C2H2-type zinc-finger protein family.</text>
</comment>
<organism>
    <name type="scientific">Xenopus laevis</name>
    <name type="common">African clawed frog</name>
    <dbReference type="NCBI Taxonomy" id="8355"/>
    <lineage>
        <taxon>Eukaryota</taxon>
        <taxon>Metazoa</taxon>
        <taxon>Chordata</taxon>
        <taxon>Craniata</taxon>
        <taxon>Vertebrata</taxon>
        <taxon>Euteleostomi</taxon>
        <taxon>Amphibia</taxon>
        <taxon>Batrachia</taxon>
        <taxon>Anura</taxon>
        <taxon>Pipoidea</taxon>
        <taxon>Pipidae</taxon>
        <taxon>Xenopodinae</taxon>
        <taxon>Xenopus</taxon>
        <taxon>Xenopus</taxon>
    </lineage>
</organism>
<feature type="chain" id="PRO_0000047200" description="Zinc finger protein GLI1">
    <location>
        <begin position="1"/>
        <end position="1360" status="greater than"/>
    </location>
</feature>
<feature type="zinc finger region" description="C2H2-type 1" evidence="2">
    <location>
        <begin position="250"/>
        <end position="275"/>
    </location>
</feature>
<feature type="zinc finger region" description="C2H2-type 2" evidence="2">
    <location>
        <begin position="316"/>
        <end position="340"/>
    </location>
</feature>
<feature type="zinc finger region" description="C2H2-type 3" evidence="2">
    <location>
        <begin position="346"/>
        <end position="371"/>
    </location>
</feature>
<feature type="zinc finger region" description="C2H2-type 4" evidence="2">
    <location>
        <begin position="377"/>
        <end position="402"/>
    </location>
</feature>
<feature type="region of interest" description="Disordered" evidence="3">
    <location>
        <begin position="198"/>
        <end position="245"/>
    </location>
</feature>
<feature type="region of interest" description="Interaction with DNA" evidence="1">
    <location>
        <begin position="298"/>
        <end position="306"/>
    </location>
</feature>
<feature type="region of interest" description="Interaction with DNA" evidence="1">
    <location>
        <begin position="360"/>
        <end position="365"/>
    </location>
</feature>
<feature type="region of interest" description="Disordered" evidence="3">
    <location>
        <begin position="390"/>
        <end position="434"/>
    </location>
</feature>
<feature type="region of interest" description="Interaction with DNA" evidence="1">
    <location>
        <begin position="390"/>
        <end position="396"/>
    </location>
</feature>
<feature type="region of interest" description="Disordered" evidence="3">
    <location>
        <begin position="457"/>
        <end position="500"/>
    </location>
</feature>
<feature type="region of interest" description="Disordered" evidence="3">
    <location>
        <begin position="718"/>
        <end position="740"/>
    </location>
</feature>
<feature type="region of interest" description="Disordered" evidence="3">
    <location>
        <begin position="1120"/>
        <end position="1213"/>
    </location>
</feature>
<feature type="compositionally biased region" description="Basic and acidic residues" evidence="3">
    <location>
        <begin position="230"/>
        <end position="245"/>
    </location>
</feature>
<feature type="compositionally biased region" description="Low complexity" evidence="3">
    <location>
        <begin position="461"/>
        <end position="473"/>
    </location>
</feature>
<feature type="compositionally biased region" description="Polar residues" evidence="3">
    <location>
        <begin position="474"/>
        <end position="496"/>
    </location>
</feature>
<feature type="compositionally biased region" description="Low complexity" evidence="3">
    <location>
        <begin position="1134"/>
        <end position="1143"/>
    </location>
</feature>
<feature type="compositionally biased region" description="Polar residues" evidence="3">
    <location>
        <begin position="1173"/>
        <end position="1190"/>
    </location>
</feature>
<feature type="non-terminal residue">
    <location>
        <position position="1360"/>
    </location>
</feature>
<keyword id="KW-0010">Activator</keyword>
<keyword id="KW-0963">Cytoplasm</keyword>
<keyword id="KW-0217">Developmental protein</keyword>
<keyword id="KW-0221">Differentiation</keyword>
<keyword id="KW-0238">DNA-binding</keyword>
<keyword id="KW-0479">Metal-binding</keyword>
<keyword id="KW-0539">Nucleus</keyword>
<keyword id="KW-1185">Reference proteome</keyword>
<keyword id="KW-0677">Repeat</keyword>
<keyword id="KW-0804">Transcription</keyword>
<keyword id="KW-0805">Transcription regulation</keyword>
<keyword id="KW-0862">Zinc</keyword>
<keyword id="KW-0863">Zinc-finger</keyword>
<reference key="1">
    <citation type="journal article" date="1997" name="Development">
        <title>Gli1 is a target of Sonic hedgehog that induces ventral neural tube development.</title>
        <authorList>
            <person name="Lee J."/>
            <person name="Platt K.A."/>
            <person name="Censullo P."/>
            <person name="Ruiz i Altaba A."/>
        </authorList>
    </citation>
    <scope>NUCLEOTIDE SEQUENCE [MRNA]</scope>
    <scope>FUNCTION</scope>
</reference>
<reference key="2">
    <citation type="submission" date="1998-07" db="EMBL/GenBank/DDBJ databases">
        <authorList>
            <person name="Lee J."/>
            <person name="Platt K.A."/>
            <person name="Censullo P."/>
            <person name="Ruiz i Altaba A."/>
        </authorList>
    </citation>
    <scope>SEQUENCE REVISION</scope>
</reference>
<accession>Q91690</accession>
<name>GLI1_XENLA</name>
<protein>
    <recommendedName>
        <fullName>Zinc finger protein GLI1</fullName>
        <shortName>GLI-1</shortName>
    </recommendedName>
</protein>
<sequence>MASRQCPPAAVFNSMNPPVNSYVEHCYLRSPNVMAEGMNEMPYCHQTNLMTSHHGFGLAQGSDHLAGTDGSRFSTPRSTMKLSKKRAMSISPLSDASIDLQTMIRTSPNSLVAFINSRCSSASGSYGHLSIGTISPSLGYQNCLNHQRPQAGPYGSNPLMPYNSHEHLSSRGMSMLQPRSSVKHCQLKSEPLSITGLDTIGSKRLEDGSEGDISSPASVGTQDPLLGLLDGRDDLEKDDGKHEPETVYETNCHWESCTKEFDTQEHLVHHINNEHIHGEKKEFVCHWQDCSRELRPFKAQYMLVVHMRRHTGEKPHKCTFEGCNKAYSRLENLKTHLRSHTGEKPYVCEHEGCNKAFSNASDRAKHQNRTHSNEKPYVCKIPGCTKRYTDPSSLRKHVKTVHGPEAHITKKHRGDGMLRAQPGHEGPGNQNVKGENQLDMEASSACKEDGRLAVPDITLKSQPSPGGQSSCSSERSPLGSTNNNDSGVEMNANTGGSFEDLTNLDDIPSVDSMGTAGASALRKLENLRIDKLNQLRKTPSSGKMVKLPSIHNSGPQGDMSVVCGPLGMSHNQHGIELPASSHVNHLNDRRNSTTSTMSSAYTVSRRSSVVSPYLPNQRAGDSGNMVDSYDISTDPSGHSNEAVCASGLPGLTPAQQYRLKAKYAAATGGPPPTPLPNMERMNTNNRMAFASSDYRGSAISSLQRRHSSNEYHNYGTGIIHPAQAPGAGIRRASDPARTGGDIQAVPKVQRFKSMTNMNVSMMGRQGTSIQQAYGGSDANLQRHMFSPRPPSITENVFMETAGPDEVCHTKEQGFIQSNEMQHYMNYQGQGSQLTAPNDHMNFNPQIHGLDGQSQNVYSHSQRAISNMHLNAENYSGQSNVSNFNQCQMTAHNQHFQNTRQAYNCANLPVQWNEVSSGTMDNPVQRPNHQIMHQNMSPGNHCQSQLSNCTVPESTKQGCPVNRNSCQQGMYMNNQKYNHGGQVQVKPEQQFHHSAPAMMSCQNMKHPSRQEHHFTKTNTMPLSSEATNCDYQGQQDSTQNSCFNVGLNLNLLSPPGRRSQTPIMQVKEIMVRNYVQSQQALMWEQHPKSMAMMTNSGDDVDTRQNQHKNTLNAAVYMGPKYMNYQGKPSPNNLMSPSSQDSQSSHTKAMGSPSSQCYNFDMMPHPPCGPKPLSRQHSVSSQSTYMGSPNQLSPSYQSSESSPRRMACLPPIQPQSEVTNNTSMMYYTGQMEMHQSKPGVHKLTTPLNLNQTSCDGHQHGQYNASHSFLKTVPYTSSCPAANTLDSLDLENTQIDFTAIIDDADNALMPGNISPNVLAGSSQASSHLTTLRNTGAVVPNMVVGDLNSMLSSLAGENKYLNTM</sequence>
<gene>
    <name type="primary">gli1</name>
</gene>